<dbReference type="EMBL" id="CP001120">
    <property type="protein sequence ID" value="ACF69162.1"/>
    <property type="molecule type" value="Genomic_DNA"/>
</dbReference>
<dbReference type="RefSeq" id="WP_000288732.1">
    <property type="nucleotide sequence ID" value="NC_011083.1"/>
</dbReference>
<dbReference type="SMR" id="B4TDZ8"/>
<dbReference type="KEGG" id="seh:SeHA_C1180"/>
<dbReference type="HOGENOM" id="CLU_118972_1_0_6"/>
<dbReference type="Proteomes" id="UP000001866">
    <property type="component" value="Chromosome"/>
</dbReference>
<dbReference type="GO" id="GO:0000917">
    <property type="term" value="P:division septum assembly"/>
    <property type="evidence" value="ECO:0007669"/>
    <property type="project" value="UniProtKB-KW"/>
</dbReference>
<dbReference type="GO" id="GO:0006281">
    <property type="term" value="P:DNA repair"/>
    <property type="evidence" value="ECO:0007669"/>
    <property type="project" value="TreeGrafter"/>
</dbReference>
<dbReference type="GO" id="GO:0051782">
    <property type="term" value="P:negative regulation of cell division"/>
    <property type="evidence" value="ECO:0007669"/>
    <property type="project" value="UniProtKB-UniRule"/>
</dbReference>
<dbReference type="GO" id="GO:0009432">
    <property type="term" value="P:SOS response"/>
    <property type="evidence" value="ECO:0007669"/>
    <property type="project" value="UniProtKB-UniRule"/>
</dbReference>
<dbReference type="FunFam" id="3.40.50.300:FF:000417">
    <property type="entry name" value="Cell division inhibitor SulA"/>
    <property type="match status" value="1"/>
</dbReference>
<dbReference type="Gene3D" id="3.40.50.300">
    <property type="entry name" value="P-loop containing nucleotide triphosphate hydrolases"/>
    <property type="match status" value="1"/>
</dbReference>
<dbReference type="HAMAP" id="MF_01179">
    <property type="entry name" value="SulA"/>
    <property type="match status" value="1"/>
</dbReference>
<dbReference type="InterPro" id="IPR004596">
    <property type="entry name" value="Cell_div_suppressor_SulA"/>
</dbReference>
<dbReference type="InterPro" id="IPR027417">
    <property type="entry name" value="P-loop_NTPase"/>
</dbReference>
<dbReference type="InterPro" id="IPR050356">
    <property type="entry name" value="SulA_CellDiv_inhibitor"/>
</dbReference>
<dbReference type="InterPro" id="IPR047696">
    <property type="entry name" value="SulA_enterobact"/>
</dbReference>
<dbReference type="NCBIfam" id="NF007892">
    <property type="entry name" value="PRK10595.1"/>
    <property type="match status" value="1"/>
</dbReference>
<dbReference type="NCBIfam" id="TIGR00623">
    <property type="entry name" value="SOS_SulA_coli"/>
    <property type="match status" value="1"/>
</dbReference>
<dbReference type="PANTHER" id="PTHR35369">
    <property type="entry name" value="BLR3025 PROTEIN-RELATED"/>
    <property type="match status" value="1"/>
</dbReference>
<dbReference type="PANTHER" id="PTHR35369:SF4">
    <property type="entry name" value="CELL DIVISION INHIBITOR SULA"/>
    <property type="match status" value="1"/>
</dbReference>
<dbReference type="Pfam" id="PF03846">
    <property type="entry name" value="SulA"/>
    <property type="match status" value="1"/>
</dbReference>
<dbReference type="PIRSF" id="PIRSF003093">
    <property type="entry name" value="SulA"/>
    <property type="match status" value="1"/>
</dbReference>
<dbReference type="SUPFAM" id="SSF52540">
    <property type="entry name" value="P-loop containing nucleoside triphosphate hydrolases"/>
    <property type="match status" value="1"/>
</dbReference>
<name>SULA_SALHS</name>
<reference key="1">
    <citation type="journal article" date="2011" name="J. Bacteriol.">
        <title>Comparative genomics of 28 Salmonella enterica isolates: evidence for CRISPR-mediated adaptive sublineage evolution.</title>
        <authorList>
            <person name="Fricke W.F."/>
            <person name="Mammel M.K."/>
            <person name="McDermott P.F."/>
            <person name="Tartera C."/>
            <person name="White D.G."/>
            <person name="Leclerc J.E."/>
            <person name="Ravel J."/>
            <person name="Cebula T.A."/>
        </authorList>
    </citation>
    <scope>NUCLEOTIDE SEQUENCE [LARGE SCALE GENOMIC DNA]</scope>
    <source>
        <strain>SL476</strain>
    </source>
</reference>
<proteinExistence type="inferred from homology"/>
<keyword id="KW-0131">Cell cycle</keyword>
<keyword id="KW-0132">Cell division</keyword>
<keyword id="KW-0227">DNA damage</keyword>
<keyword id="KW-0717">Septation</keyword>
<keyword id="KW-0742">SOS response</keyword>
<sequence length="169" mass="19013">MYTSGYANRSSSFPTTTHNAARTATENAAAGLVSEVVYHEDQPMMAQLLLLPLLRQLGQQSRWQLWLTPQQKLSREWVQSSGLPLTKVMQISQLAPRHTLESMIRALRTGNYSVVIGWMTEELTEEEHASLVEAAKVGNAVGFIMRPVRAHALPRRQHSGLKIHSNLYH</sequence>
<evidence type="ECO:0000255" key="1">
    <source>
        <dbReference type="HAMAP-Rule" id="MF_01179"/>
    </source>
</evidence>
<comment type="function">
    <text evidence="1">Component of the SOS system and an inhibitor of cell division. Accumulation of SulA causes rapid cessation of cell division and the appearance of long, non-septate filaments. In the presence of GTP, binds a polymerization-competent form of FtsZ in a 1:1 ratio, thus inhibiting FtsZ polymerization and therefore preventing it from participating in the assembly of the Z ring. This mechanism prevents the premature segregation of damaged DNA to daughter cells during cell division.</text>
</comment>
<comment type="subunit">
    <text evidence="1">Interacts with FtsZ.</text>
</comment>
<comment type="induction">
    <text evidence="1">By DNA damage, as part of the SOS response.</text>
</comment>
<comment type="PTM">
    <text evidence="1">Is rapidly cleaved and degraded by the Lon protease once DNA damage is repaired.</text>
</comment>
<comment type="similarity">
    <text evidence="1">Belongs to the SulA family.</text>
</comment>
<feature type="chain" id="PRO_1000138168" description="Cell division inhibitor SulA">
    <location>
        <begin position="1"/>
        <end position="169"/>
    </location>
</feature>
<feature type="region of interest" description="FtsZ binding" evidence="1">
    <location>
        <begin position="106"/>
        <end position="112"/>
    </location>
</feature>
<feature type="region of interest" description="Lon protease binding" evidence="1">
    <location>
        <begin position="162"/>
        <end position="169"/>
    </location>
</feature>
<feature type="site" description="Essential for degradation by Lon protease" evidence="1">
    <location>
        <position position="169"/>
    </location>
</feature>
<accession>B4TDZ8</accession>
<protein>
    <recommendedName>
        <fullName evidence="1">Cell division inhibitor SulA</fullName>
    </recommendedName>
</protein>
<organism>
    <name type="scientific">Salmonella heidelberg (strain SL476)</name>
    <dbReference type="NCBI Taxonomy" id="454169"/>
    <lineage>
        <taxon>Bacteria</taxon>
        <taxon>Pseudomonadati</taxon>
        <taxon>Pseudomonadota</taxon>
        <taxon>Gammaproteobacteria</taxon>
        <taxon>Enterobacterales</taxon>
        <taxon>Enterobacteriaceae</taxon>
        <taxon>Salmonella</taxon>
    </lineage>
</organism>
<gene>
    <name evidence="1" type="primary">sulA</name>
    <name type="ordered locus">SeHA_C1180</name>
</gene>